<proteinExistence type="inferred from homology"/>
<accession>A8G5U6</accession>
<sequence length="185" mass="20434">MNSDLTSFDKIEQKIDGSRKISNYIIGGMLTIGGIGFLLASISSYTGRDLLPLGNPSALLFIPQGIIMGAYGVIANLLNFYLWYMVYINFGSGSNSFDKSSKSVEIKRKGLFKDIEVRLDFDEIKSVKLDISEGFNPRRRIALVIKGRKKPLPISGAGELKPLLQVEEEGARLAKFLNVNLEGLK</sequence>
<feature type="chain" id="PRO_1000060243" description="Photosystem I assembly protein Ycf4">
    <location>
        <begin position="1"/>
        <end position="185"/>
    </location>
</feature>
<feature type="transmembrane region" description="Helical" evidence="1">
    <location>
        <begin position="24"/>
        <end position="44"/>
    </location>
</feature>
<feature type="transmembrane region" description="Helical" evidence="1">
    <location>
        <begin position="58"/>
        <end position="78"/>
    </location>
</feature>
<reference key="1">
    <citation type="journal article" date="2007" name="PLoS Genet.">
        <title>Patterns and implications of gene gain and loss in the evolution of Prochlorococcus.</title>
        <authorList>
            <person name="Kettler G.C."/>
            <person name="Martiny A.C."/>
            <person name="Huang K."/>
            <person name="Zucker J."/>
            <person name="Coleman M.L."/>
            <person name="Rodrigue S."/>
            <person name="Chen F."/>
            <person name="Lapidus A."/>
            <person name="Ferriera S."/>
            <person name="Johnson J."/>
            <person name="Steglich C."/>
            <person name="Church G.M."/>
            <person name="Richardson P."/>
            <person name="Chisholm S.W."/>
        </authorList>
    </citation>
    <scope>NUCLEOTIDE SEQUENCE [LARGE SCALE GENOMIC DNA]</scope>
    <source>
        <strain>MIT 9215</strain>
    </source>
</reference>
<protein>
    <recommendedName>
        <fullName evidence="1">Photosystem I assembly protein Ycf4</fullName>
    </recommendedName>
</protein>
<organism>
    <name type="scientific">Prochlorococcus marinus (strain MIT 9215)</name>
    <dbReference type="NCBI Taxonomy" id="93060"/>
    <lineage>
        <taxon>Bacteria</taxon>
        <taxon>Bacillati</taxon>
        <taxon>Cyanobacteriota</taxon>
        <taxon>Cyanophyceae</taxon>
        <taxon>Synechococcales</taxon>
        <taxon>Prochlorococcaceae</taxon>
        <taxon>Prochlorococcus</taxon>
    </lineage>
</organism>
<name>YCF4_PROM2</name>
<evidence type="ECO:0000255" key="1">
    <source>
        <dbReference type="HAMAP-Rule" id="MF_00437"/>
    </source>
</evidence>
<dbReference type="EMBL" id="CP000825">
    <property type="protein sequence ID" value="ABV50977.1"/>
    <property type="molecule type" value="Genomic_DNA"/>
</dbReference>
<dbReference type="RefSeq" id="WP_012008033.1">
    <property type="nucleotide sequence ID" value="NC_009840.1"/>
</dbReference>
<dbReference type="STRING" id="93060.P9215_13621"/>
<dbReference type="KEGG" id="pmh:P9215_13621"/>
<dbReference type="eggNOG" id="ENOG502Z7YX">
    <property type="taxonomic scope" value="Bacteria"/>
</dbReference>
<dbReference type="HOGENOM" id="CLU_095465_0_0_3"/>
<dbReference type="OrthoDB" id="7059574at2"/>
<dbReference type="Proteomes" id="UP000002014">
    <property type="component" value="Chromosome"/>
</dbReference>
<dbReference type="GO" id="GO:0009522">
    <property type="term" value="C:photosystem I"/>
    <property type="evidence" value="ECO:0007669"/>
    <property type="project" value="InterPro"/>
</dbReference>
<dbReference type="GO" id="GO:0031676">
    <property type="term" value="C:plasma membrane-derived thylakoid membrane"/>
    <property type="evidence" value="ECO:0007669"/>
    <property type="project" value="UniProtKB-SubCell"/>
</dbReference>
<dbReference type="GO" id="GO:0015979">
    <property type="term" value="P:photosynthesis"/>
    <property type="evidence" value="ECO:0007669"/>
    <property type="project" value="UniProtKB-UniRule"/>
</dbReference>
<dbReference type="HAMAP" id="MF_00437">
    <property type="entry name" value="Ycf4"/>
    <property type="match status" value="1"/>
</dbReference>
<dbReference type="InterPro" id="IPR003359">
    <property type="entry name" value="PSI_Ycf4_assembly"/>
</dbReference>
<dbReference type="NCBIfam" id="NF002712">
    <property type="entry name" value="PRK02542.1"/>
    <property type="match status" value="1"/>
</dbReference>
<dbReference type="Pfam" id="PF02392">
    <property type="entry name" value="Ycf4"/>
    <property type="match status" value="1"/>
</dbReference>
<gene>
    <name evidence="1" type="primary">ycf4</name>
    <name type="ordered locus">P9215_13621</name>
</gene>
<keyword id="KW-0472">Membrane</keyword>
<keyword id="KW-0602">Photosynthesis</keyword>
<keyword id="KW-0793">Thylakoid</keyword>
<keyword id="KW-0812">Transmembrane</keyword>
<keyword id="KW-1133">Transmembrane helix</keyword>
<comment type="function">
    <text evidence="1">Seems to be required for the assembly of the photosystem I complex.</text>
</comment>
<comment type="subcellular location">
    <subcellularLocation>
        <location evidence="1">Cellular thylakoid membrane</location>
        <topology evidence="1">Multi-pass membrane protein</topology>
    </subcellularLocation>
</comment>
<comment type="similarity">
    <text evidence="1">Belongs to the Ycf4 family.</text>
</comment>